<protein>
    <recommendedName>
        <fullName evidence="1">Ribosomal RNA large subunit methyltransferase G</fullName>
        <ecNumber evidence="1">2.1.1.174</ecNumber>
    </recommendedName>
    <alternativeName>
        <fullName evidence="1">23S rRNA m2G1835 methyltransferase</fullName>
    </alternativeName>
    <alternativeName>
        <fullName evidence="1">rRNA (guanine-N(2)-)-methyltransferase RlmG</fullName>
    </alternativeName>
</protein>
<organism>
    <name type="scientific">Erwinia tasmaniensis (strain DSM 17950 / CFBP 7177 / CIP 109463 / NCPPB 4357 / Et1/99)</name>
    <dbReference type="NCBI Taxonomy" id="465817"/>
    <lineage>
        <taxon>Bacteria</taxon>
        <taxon>Pseudomonadati</taxon>
        <taxon>Pseudomonadota</taxon>
        <taxon>Gammaproteobacteria</taxon>
        <taxon>Enterobacterales</taxon>
        <taxon>Erwiniaceae</taxon>
        <taxon>Erwinia</taxon>
    </lineage>
</organism>
<comment type="function">
    <text evidence="1">Specifically methylates the guanine in position 1835 (m2G1835) of 23S rRNA.</text>
</comment>
<comment type="catalytic activity">
    <reaction evidence="1">
        <text>guanosine(1835) in 23S rRNA + S-adenosyl-L-methionine = N(2)-methylguanosine(1835) in 23S rRNA + S-adenosyl-L-homocysteine + H(+)</text>
        <dbReference type="Rhea" id="RHEA:42744"/>
        <dbReference type="Rhea" id="RHEA-COMP:10217"/>
        <dbReference type="Rhea" id="RHEA-COMP:10218"/>
        <dbReference type="ChEBI" id="CHEBI:15378"/>
        <dbReference type="ChEBI" id="CHEBI:57856"/>
        <dbReference type="ChEBI" id="CHEBI:59789"/>
        <dbReference type="ChEBI" id="CHEBI:74269"/>
        <dbReference type="ChEBI" id="CHEBI:74481"/>
        <dbReference type="EC" id="2.1.1.174"/>
    </reaction>
</comment>
<comment type="subcellular location">
    <subcellularLocation>
        <location evidence="1">Cytoplasm</location>
    </subcellularLocation>
</comment>
<comment type="similarity">
    <text evidence="1">Belongs to the methyltransferase superfamily. RlmG family.</text>
</comment>
<reference key="1">
    <citation type="journal article" date="2008" name="Environ. Microbiol.">
        <title>The genome of Erwinia tasmaniensis strain Et1/99, a non-pathogenic bacterium in the genus Erwinia.</title>
        <authorList>
            <person name="Kube M."/>
            <person name="Migdoll A.M."/>
            <person name="Mueller I."/>
            <person name="Kuhl H."/>
            <person name="Beck A."/>
            <person name="Reinhardt R."/>
            <person name="Geider K."/>
        </authorList>
    </citation>
    <scope>NUCLEOTIDE SEQUENCE [LARGE SCALE GENOMIC DNA]</scope>
    <source>
        <strain>DSM 17950 / CFBP 7177 / CIP 109463 / NCPPB 4357 / Et1/99</strain>
    </source>
</reference>
<feature type="chain" id="PRO_0000366454" description="Ribosomal RNA large subunit methyltransferase G">
    <location>
        <begin position="1"/>
        <end position="375"/>
    </location>
</feature>
<accession>B2VDD5</accession>
<evidence type="ECO:0000255" key="1">
    <source>
        <dbReference type="HAMAP-Rule" id="MF_01859"/>
    </source>
</evidence>
<sequence>MSQLELSNRMLTLHRFPQMREESPLQAWDAADEYLLNHLDNLPVNGPTLIFNDTFGALACALAGEGVWSISDSWLNQQATRQNLALNQLDEGDVRLLDSLAPLPGAPARVLIKVPKTLALLEKQLRALRAVVTPETQIVAAGKAKEIHTSTLQLFEKILGPTTTSLAWKKARLIYATFTQPELAESEVISRWPLDGTPWQIHNHANVFARGGLDIGARFFMQHLPDDIDGEIVDLGCGNGVIGLMALRQNPLAQVHFLDESYMAVASSRMNVELNCPDDLARCEFRVNNALAGYPSDRLHAVLCNPPFHQQNAVTDHIAWQMFRDARRCLQYGGELRIVGNRHLDYYHKMKKLFGNCTTVATHQKFVILRSVKMP</sequence>
<keyword id="KW-0963">Cytoplasm</keyword>
<keyword id="KW-0489">Methyltransferase</keyword>
<keyword id="KW-1185">Reference proteome</keyword>
<keyword id="KW-0698">rRNA processing</keyword>
<keyword id="KW-0949">S-adenosyl-L-methionine</keyword>
<keyword id="KW-0808">Transferase</keyword>
<dbReference type="EC" id="2.1.1.174" evidence="1"/>
<dbReference type="EMBL" id="CU468135">
    <property type="protein sequence ID" value="CAO97942.1"/>
    <property type="molecule type" value="Genomic_DNA"/>
</dbReference>
<dbReference type="RefSeq" id="WP_012442596.1">
    <property type="nucleotide sequence ID" value="NC_010694.1"/>
</dbReference>
<dbReference type="SMR" id="B2VDD5"/>
<dbReference type="STRING" id="465817.ETA_28960"/>
<dbReference type="KEGG" id="eta:ETA_28960"/>
<dbReference type="eggNOG" id="COG2813">
    <property type="taxonomic scope" value="Bacteria"/>
</dbReference>
<dbReference type="HOGENOM" id="CLU_040288_4_0_6"/>
<dbReference type="OrthoDB" id="29650at2"/>
<dbReference type="Proteomes" id="UP000001726">
    <property type="component" value="Chromosome"/>
</dbReference>
<dbReference type="GO" id="GO:0005737">
    <property type="term" value="C:cytoplasm"/>
    <property type="evidence" value="ECO:0007669"/>
    <property type="project" value="UniProtKB-SubCell"/>
</dbReference>
<dbReference type="GO" id="GO:0052916">
    <property type="term" value="F:23S rRNA (guanine(1835)-N(2))-methyltransferase activity"/>
    <property type="evidence" value="ECO:0007669"/>
    <property type="project" value="UniProtKB-EC"/>
</dbReference>
<dbReference type="GO" id="GO:0003676">
    <property type="term" value="F:nucleic acid binding"/>
    <property type="evidence" value="ECO:0007669"/>
    <property type="project" value="InterPro"/>
</dbReference>
<dbReference type="CDD" id="cd02440">
    <property type="entry name" value="AdoMet_MTases"/>
    <property type="match status" value="1"/>
</dbReference>
<dbReference type="Gene3D" id="3.40.50.150">
    <property type="entry name" value="Vaccinia Virus protein VP39"/>
    <property type="match status" value="2"/>
</dbReference>
<dbReference type="HAMAP" id="MF_01859">
    <property type="entry name" value="23SrRNA_methyltr_G"/>
    <property type="match status" value="1"/>
</dbReference>
<dbReference type="InterPro" id="IPR002052">
    <property type="entry name" value="DNA_methylase_N6_adenine_CS"/>
</dbReference>
<dbReference type="InterPro" id="IPR017237">
    <property type="entry name" value="rRNA_m2G-MeTrfase_RlmG"/>
</dbReference>
<dbReference type="InterPro" id="IPR046977">
    <property type="entry name" value="RsmC/RlmG"/>
</dbReference>
<dbReference type="InterPro" id="IPR029063">
    <property type="entry name" value="SAM-dependent_MTases_sf"/>
</dbReference>
<dbReference type="InterPro" id="IPR007848">
    <property type="entry name" value="Small_mtfrase_dom"/>
</dbReference>
<dbReference type="NCBIfam" id="NF011577">
    <property type="entry name" value="PRK15001.1"/>
    <property type="match status" value="1"/>
</dbReference>
<dbReference type="PANTHER" id="PTHR47816:SF5">
    <property type="entry name" value="RIBOSOMAL RNA LARGE SUBUNIT METHYLTRANSFERASE G"/>
    <property type="match status" value="1"/>
</dbReference>
<dbReference type="PANTHER" id="PTHR47816">
    <property type="entry name" value="RIBOSOMAL RNA SMALL SUBUNIT METHYLTRANSFERASE C"/>
    <property type="match status" value="1"/>
</dbReference>
<dbReference type="Pfam" id="PF05175">
    <property type="entry name" value="MTS"/>
    <property type="match status" value="1"/>
</dbReference>
<dbReference type="PIRSF" id="PIRSF037565">
    <property type="entry name" value="RRNA_m2G_Mtase_RsmD_prd"/>
    <property type="match status" value="1"/>
</dbReference>
<dbReference type="SUPFAM" id="SSF53335">
    <property type="entry name" value="S-adenosyl-L-methionine-dependent methyltransferases"/>
    <property type="match status" value="1"/>
</dbReference>
<proteinExistence type="inferred from homology"/>
<name>RLMG_ERWT9</name>
<gene>
    <name evidence="1" type="primary">rlmG</name>
    <name type="ordered locus">ETA_28960</name>
</gene>